<proteinExistence type="predicted"/>
<sequence>MENNVLYGVYSTRSRKFCFGIEEPSKTKARKELFNRIGTDAYKWRFEIRKIKRK</sequence>
<accession>O34429</accession>
<organism>
    <name type="scientific">Bacillus subtilis (strain 168)</name>
    <dbReference type="NCBI Taxonomy" id="224308"/>
    <lineage>
        <taxon>Bacteria</taxon>
        <taxon>Bacillati</taxon>
        <taxon>Bacillota</taxon>
        <taxon>Bacilli</taxon>
        <taxon>Bacillales</taxon>
        <taxon>Bacillaceae</taxon>
        <taxon>Bacillus</taxon>
    </lineage>
</organism>
<feature type="chain" id="PRO_0000372595" description="SPbeta prophage-derived uncharacterized protein YoqE">
    <location>
        <begin position="1"/>
        <end position="54"/>
    </location>
</feature>
<name>YOQE_BACSU</name>
<reference key="1">
    <citation type="journal article" date="1997" name="Nature">
        <title>The complete genome sequence of the Gram-positive bacterium Bacillus subtilis.</title>
        <authorList>
            <person name="Kunst F."/>
            <person name="Ogasawara N."/>
            <person name="Moszer I."/>
            <person name="Albertini A.M."/>
            <person name="Alloni G."/>
            <person name="Azevedo V."/>
            <person name="Bertero M.G."/>
            <person name="Bessieres P."/>
            <person name="Bolotin A."/>
            <person name="Borchert S."/>
            <person name="Borriss R."/>
            <person name="Boursier L."/>
            <person name="Brans A."/>
            <person name="Braun M."/>
            <person name="Brignell S.C."/>
            <person name="Bron S."/>
            <person name="Brouillet S."/>
            <person name="Bruschi C.V."/>
            <person name="Caldwell B."/>
            <person name="Capuano V."/>
            <person name="Carter N.M."/>
            <person name="Choi S.-K."/>
            <person name="Codani J.-J."/>
            <person name="Connerton I.F."/>
            <person name="Cummings N.J."/>
            <person name="Daniel R.A."/>
            <person name="Denizot F."/>
            <person name="Devine K.M."/>
            <person name="Duesterhoeft A."/>
            <person name="Ehrlich S.D."/>
            <person name="Emmerson P.T."/>
            <person name="Entian K.-D."/>
            <person name="Errington J."/>
            <person name="Fabret C."/>
            <person name="Ferrari E."/>
            <person name="Foulger D."/>
            <person name="Fritz C."/>
            <person name="Fujita M."/>
            <person name="Fujita Y."/>
            <person name="Fuma S."/>
            <person name="Galizzi A."/>
            <person name="Galleron N."/>
            <person name="Ghim S.-Y."/>
            <person name="Glaser P."/>
            <person name="Goffeau A."/>
            <person name="Golightly E.J."/>
            <person name="Grandi G."/>
            <person name="Guiseppi G."/>
            <person name="Guy B.J."/>
            <person name="Haga K."/>
            <person name="Haiech J."/>
            <person name="Harwood C.R."/>
            <person name="Henaut A."/>
            <person name="Hilbert H."/>
            <person name="Holsappel S."/>
            <person name="Hosono S."/>
            <person name="Hullo M.-F."/>
            <person name="Itaya M."/>
            <person name="Jones L.-M."/>
            <person name="Joris B."/>
            <person name="Karamata D."/>
            <person name="Kasahara Y."/>
            <person name="Klaerr-Blanchard M."/>
            <person name="Klein C."/>
            <person name="Kobayashi Y."/>
            <person name="Koetter P."/>
            <person name="Koningstein G."/>
            <person name="Krogh S."/>
            <person name="Kumano M."/>
            <person name="Kurita K."/>
            <person name="Lapidus A."/>
            <person name="Lardinois S."/>
            <person name="Lauber J."/>
            <person name="Lazarevic V."/>
            <person name="Lee S.-M."/>
            <person name="Levine A."/>
            <person name="Liu H."/>
            <person name="Masuda S."/>
            <person name="Mauel C."/>
            <person name="Medigue C."/>
            <person name="Medina N."/>
            <person name="Mellado R.P."/>
            <person name="Mizuno M."/>
            <person name="Moestl D."/>
            <person name="Nakai S."/>
            <person name="Noback M."/>
            <person name="Noone D."/>
            <person name="O'Reilly M."/>
            <person name="Ogawa K."/>
            <person name="Ogiwara A."/>
            <person name="Oudega B."/>
            <person name="Park S.-H."/>
            <person name="Parro V."/>
            <person name="Pohl T.M."/>
            <person name="Portetelle D."/>
            <person name="Porwollik S."/>
            <person name="Prescott A.M."/>
            <person name="Presecan E."/>
            <person name="Pujic P."/>
            <person name="Purnelle B."/>
            <person name="Rapoport G."/>
            <person name="Rey M."/>
            <person name="Reynolds S."/>
            <person name="Rieger M."/>
            <person name="Rivolta C."/>
            <person name="Rocha E."/>
            <person name="Roche B."/>
            <person name="Rose M."/>
            <person name="Sadaie Y."/>
            <person name="Sato T."/>
            <person name="Scanlan E."/>
            <person name="Schleich S."/>
            <person name="Schroeter R."/>
            <person name="Scoffone F."/>
            <person name="Sekiguchi J."/>
            <person name="Sekowska A."/>
            <person name="Seror S.J."/>
            <person name="Serror P."/>
            <person name="Shin B.-S."/>
            <person name="Soldo B."/>
            <person name="Sorokin A."/>
            <person name="Tacconi E."/>
            <person name="Takagi T."/>
            <person name="Takahashi H."/>
            <person name="Takemaru K."/>
            <person name="Takeuchi M."/>
            <person name="Tamakoshi A."/>
            <person name="Tanaka T."/>
            <person name="Terpstra P."/>
            <person name="Tognoni A."/>
            <person name="Tosato V."/>
            <person name="Uchiyama S."/>
            <person name="Vandenbol M."/>
            <person name="Vannier F."/>
            <person name="Vassarotti A."/>
            <person name="Viari A."/>
            <person name="Wambutt R."/>
            <person name="Wedler E."/>
            <person name="Wedler H."/>
            <person name="Weitzenegger T."/>
            <person name="Winters P."/>
            <person name="Wipat A."/>
            <person name="Yamamoto H."/>
            <person name="Yamane K."/>
            <person name="Yasumoto K."/>
            <person name="Yata K."/>
            <person name="Yoshida K."/>
            <person name="Yoshikawa H.-F."/>
            <person name="Zumstein E."/>
            <person name="Yoshikawa H."/>
            <person name="Danchin A."/>
        </authorList>
    </citation>
    <scope>NUCLEOTIDE SEQUENCE [LARGE SCALE GENOMIC DNA]</scope>
    <source>
        <strain>168</strain>
    </source>
</reference>
<keyword id="KW-1185">Reference proteome</keyword>
<protein>
    <recommendedName>
        <fullName>SPbeta prophage-derived uncharacterized protein YoqE</fullName>
    </recommendedName>
</protein>
<dbReference type="EMBL" id="AL009126">
    <property type="protein sequence ID" value="CAB13958.1"/>
    <property type="molecule type" value="Genomic_DNA"/>
</dbReference>
<dbReference type="RefSeq" id="NP_389948.1">
    <property type="nucleotide sequence ID" value="NC_000964.3"/>
</dbReference>
<dbReference type="RefSeq" id="WP_004399423.1">
    <property type="nucleotide sequence ID" value="NZ_OZ025638.1"/>
</dbReference>
<dbReference type="FunCoup" id="O34429">
    <property type="interactions" value="72"/>
</dbReference>
<dbReference type="STRING" id="224308.BSU20660"/>
<dbReference type="PaxDb" id="224308-BSU20660"/>
<dbReference type="EnsemblBacteria" id="CAB13958">
    <property type="protein sequence ID" value="CAB13958"/>
    <property type="gene ID" value="BSU_20660"/>
</dbReference>
<dbReference type="GeneID" id="939433"/>
<dbReference type="KEGG" id="bsu:BSU20660"/>
<dbReference type="PATRIC" id="fig|224308.179.peg.2256"/>
<dbReference type="InParanoid" id="O34429"/>
<dbReference type="OrthoDB" id="2892801at2"/>
<dbReference type="BioCyc" id="BSUB:BSU20660-MONOMER"/>
<dbReference type="Proteomes" id="UP000001570">
    <property type="component" value="Chromosome"/>
</dbReference>
<gene>
    <name type="primary">yoqE</name>
    <name type="ordered locus">BSU20660</name>
</gene>